<protein>
    <recommendedName>
        <fullName evidence="1">Probable potassium transport system protein Kup</fullName>
    </recommendedName>
</protein>
<keyword id="KW-0997">Cell inner membrane</keyword>
<keyword id="KW-1003">Cell membrane</keyword>
<keyword id="KW-0406">Ion transport</keyword>
<keyword id="KW-0472">Membrane</keyword>
<keyword id="KW-0630">Potassium</keyword>
<keyword id="KW-0633">Potassium transport</keyword>
<keyword id="KW-1185">Reference proteome</keyword>
<keyword id="KW-0769">Symport</keyword>
<keyword id="KW-0812">Transmembrane</keyword>
<keyword id="KW-1133">Transmembrane helix</keyword>
<keyword id="KW-0813">Transport</keyword>
<comment type="function">
    <text evidence="1">Transport of potassium into the cell. Likely operates as a K(+):H(+) symporter.</text>
</comment>
<comment type="catalytic activity">
    <reaction evidence="1">
        <text>K(+)(in) + H(+)(in) = K(+)(out) + H(+)(out)</text>
        <dbReference type="Rhea" id="RHEA:28490"/>
        <dbReference type="ChEBI" id="CHEBI:15378"/>
        <dbReference type="ChEBI" id="CHEBI:29103"/>
    </reaction>
    <physiologicalReaction direction="right-to-left" evidence="1">
        <dbReference type="Rhea" id="RHEA:28492"/>
    </physiologicalReaction>
</comment>
<comment type="subcellular location">
    <subcellularLocation>
        <location evidence="1">Cell inner membrane</location>
        <topology evidence="1">Multi-pass membrane protein</topology>
    </subcellularLocation>
</comment>
<comment type="similarity">
    <text evidence="1">Belongs to the HAK/KUP transporter (TC 2.A.72) family.</text>
</comment>
<dbReference type="EMBL" id="AM398681">
    <property type="protein sequence ID" value="CAL42724.1"/>
    <property type="molecule type" value="Genomic_DNA"/>
</dbReference>
<dbReference type="RefSeq" id="WP_011962780.1">
    <property type="nucleotide sequence ID" value="NC_009613.3"/>
</dbReference>
<dbReference type="RefSeq" id="YP_001295540.1">
    <property type="nucleotide sequence ID" value="NC_009613.3"/>
</dbReference>
<dbReference type="STRING" id="402612.FP0619"/>
<dbReference type="EnsemblBacteria" id="CAL42724">
    <property type="protein sequence ID" value="CAL42724"/>
    <property type="gene ID" value="FP0619"/>
</dbReference>
<dbReference type="GeneID" id="66552702"/>
<dbReference type="KEGG" id="fps:FP0619"/>
<dbReference type="PATRIC" id="fig|402612.5.peg.634"/>
<dbReference type="eggNOG" id="COG3158">
    <property type="taxonomic scope" value="Bacteria"/>
</dbReference>
<dbReference type="HOGENOM" id="CLU_008142_4_1_10"/>
<dbReference type="OrthoDB" id="9805577at2"/>
<dbReference type="Proteomes" id="UP000006394">
    <property type="component" value="Chromosome"/>
</dbReference>
<dbReference type="GO" id="GO:0005886">
    <property type="term" value="C:plasma membrane"/>
    <property type="evidence" value="ECO:0007669"/>
    <property type="project" value="UniProtKB-SubCell"/>
</dbReference>
<dbReference type="GO" id="GO:0015079">
    <property type="term" value="F:potassium ion transmembrane transporter activity"/>
    <property type="evidence" value="ECO:0007669"/>
    <property type="project" value="UniProtKB-UniRule"/>
</dbReference>
<dbReference type="GO" id="GO:0015293">
    <property type="term" value="F:symporter activity"/>
    <property type="evidence" value="ECO:0007669"/>
    <property type="project" value="UniProtKB-UniRule"/>
</dbReference>
<dbReference type="HAMAP" id="MF_01522">
    <property type="entry name" value="Kup"/>
    <property type="match status" value="1"/>
</dbReference>
<dbReference type="InterPro" id="IPR003855">
    <property type="entry name" value="K+_transporter"/>
</dbReference>
<dbReference type="InterPro" id="IPR053952">
    <property type="entry name" value="K_trans_C"/>
</dbReference>
<dbReference type="InterPro" id="IPR053951">
    <property type="entry name" value="K_trans_N"/>
</dbReference>
<dbReference type="InterPro" id="IPR023051">
    <property type="entry name" value="Kup"/>
</dbReference>
<dbReference type="PANTHER" id="PTHR30540:SF83">
    <property type="entry name" value="K+ POTASSIUM TRANSPORTER"/>
    <property type="match status" value="1"/>
</dbReference>
<dbReference type="PANTHER" id="PTHR30540">
    <property type="entry name" value="OSMOTIC STRESS POTASSIUM TRANSPORTER"/>
    <property type="match status" value="1"/>
</dbReference>
<dbReference type="Pfam" id="PF02705">
    <property type="entry name" value="K_trans"/>
    <property type="match status" value="1"/>
</dbReference>
<dbReference type="Pfam" id="PF22776">
    <property type="entry name" value="K_trans_C"/>
    <property type="match status" value="1"/>
</dbReference>
<sequence>MSASSHHDLHSKLSLGGILVTLGIIYGDIGTSPLYVMKSIIGLHTIKPEVVLGGISAIFWTLTLQTTLKYVLITLSADNHGEGGIFALYALVKRTKVKWLIIPAIIGGSALLADGIITPPVSVASAVEGVRTYYPDINTVPIVIAILVVLFTIQQFGTKLVGKFFAPMMMIWFAMLAILGILQITQNTSVLCAVNPYYAYKLLSIHPDGFYVLGFVFLCTTGAEALYSDMGHCGRKNIRISWIFVKIALLLNYFGQGAYLIKHAGHTLKSINANNGNPFYLVMPEWFQPFGIVISTMAAVIASQALISGSFTLINEAMRLNFWPKVKIKYPTDLKGQIYIPSINWLLLAGCIGIVLHFEESSKMEAAYGLAIVLCMIMTTILLTYFMILKRISWFIIAPLILLYLVIEFSFLIANLDKFPHGGYVTLIIASALTFIMSIWYTAKKISKNYTKIVKIQTYKKVLAELSVDLSIPKYATHLVYMTNANRVDEIEEKVMYSILQKRPKRADLYWFIHINITNEPYKKEYKVTEIIKNDLFRIDFNLGFREPTKINLMFKEVIKDMVAKGEVDITSRYESLSKNNIIGDFKFVLSEKFLSNDSFMHWHEKLVMNTYFFFKKMSLSEEQAFGLDSSSVKVEKFPMVLHAPEKIELCRIK</sequence>
<accession>A6GXA1</accession>
<gene>
    <name evidence="1" type="primary">kup</name>
    <name type="ordered locus">FP0619</name>
</gene>
<organism>
    <name type="scientific">Flavobacterium psychrophilum (strain ATCC 49511 / DSM 21280 / CIP 103535 / JIP02/86)</name>
    <dbReference type="NCBI Taxonomy" id="402612"/>
    <lineage>
        <taxon>Bacteria</taxon>
        <taxon>Pseudomonadati</taxon>
        <taxon>Bacteroidota</taxon>
        <taxon>Flavobacteriia</taxon>
        <taxon>Flavobacteriales</taxon>
        <taxon>Flavobacteriaceae</taxon>
        <taxon>Flavobacterium</taxon>
    </lineage>
</organism>
<feature type="chain" id="PRO_0000300164" description="Probable potassium transport system protein Kup">
    <location>
        <begin position="1"/>
        <end position="654"/>
    </location>
</feature>
<feature type="transmembrane region" description="Helical" evidence="1">
    <location>
        <begin position="17"/>
        <end position="37"/>
    </location>
</feature>
<feature type="transmembrane region" description="Helical" evidence="1">
    <location>
        <begin position="40"/>
        <end position="60"/>
    </location>
</feature>
<feature type="transmembrane region" description="Helical" evidence="1">
    <location>
        <begin position="71"/>
        <end position="91"/>
    </location>
</feature>
<feature type="transmembrane region" description="Helical" evidence="1">
    <location>
        <begin position="99"/>
        <end position="119"/>
    </location>
</feature>
<feature type="transmembrane region" description="Helical" evidence="1">
    <location>
        <begin position="137"/>
        <end position="157"/>
    </location>
</feature>
<feature type="transmembrane region" description="Helical" evidence="1">
    <location>
        <begin position="164"/>
        <end position="184"/>
    </location>
</feature>
<feature type="transmembrane region" description="Helical" evidence="1">
    <location>
        <begin position="202"/>
        <end position="222"/>
    </location>
</feature>
<feature type="transmembrane region" description="Helical" evidence="1">
    <location>
        <begin position="240"/>
        <end position="260"/>
    </location>
</feature>
<feature type="transmembrane region" description="Helical" evidence="1">
    <location>
        <begin position="281"/>
        <end position="301"/>
    </location>
</feature>
<feature type="transmembrane region" description="Helical" evidence="1">
    <location>
        <begin position="338"/>
        <end position="358"/>
    </location>
</feature>
<feature type="transmembrane region" description="Helical" evidence="1">
    <location>
        <begin position="369"/>
        <end position="389"/>
    </location>
</feature>
<feature type="transmembrane region" description="Helical" evidence="1">
    <location>
        <begin position="394"/>
        <end position="414"/>
    </location>
</feature>
<feature type="transmembrane region" description="Helical" evidence="1">
    <location>
        <begin position="423"/>
        <end position="443"/>
    </location>
</feature>
<reference key="1">
    <citation type="journal article" date="2007" name="Nat. Biotechnol.">
        <title>Complete genome sequence of the fish pathogen Flavobacterium psychrophilum.</title>
        <authorList>
            <person name="Duchaud E."/>
            <person name="Boussaha M."/>
            <person name="Loux V."/>
            <person name="Bernardet J.-F."/>
            <person name="Michel C."/>
            <person name="Kerouault B."/>
            <person name="Mondot S."/>
            <person name="Nicolas P."/>
            <person name="Bossy R."/>
            <person name="Caron C."/>
            <person name="Bessieres P."/>
            <person name="Gibrat J.-F."/>
            <person name="Claverol S."/>
            <person name="Dumetz F."/>
            <person name="Le Henaff M."/>
            <person name="Benmansour A."/>
        </authorList>
    </citation>
    <scope>NUCLEOTIDE SEQUENCE [LARGE SCALE GENOMIC DNA]</scope>
    <source>
        <strain>ATCC 49511 / DSM 21280 / CIP 103535 / JIP02/86</strain>
    </source>
</reference>
<evidence type="ECO:0000255" key="1">
    <source>
        <dbReference type="HAMAP-Rule" id="MF_01522"/>
    </source>
</evidence>
<name>KUP_FLAPJ</name>
<proteinExistence type="inferred from homology"/>